<reference key="1">
    <citation type="journal article" date="2005" name="Proteins">
        <title>A novel strategy for the identification of toxinlike structures in spider venom.</title>
        <authorList>
            <person name="Kozlov S.A."/>
            <person name="Malyavka A."/>
            <person name="McCutchen B."/>
            <person name="Lu A."/>
            <person name="Schepers E."/>
            <person name="Herrmann R."/>
            <person name="Grishin E.V."/>
        </authorList>
    </citation>
    <scope>NUCLEOTIDE SEQUENCE [MRNA]</scope>
    <source>
        <tissue>Venom gland</tissue>
    </source>
</reference>
<accession>Q5Y4V5</accession>
<keyword id="KW-0027">Amidation</keyword>
<keyword id="KW-1015">Disulfide bond</keyword>
<keyword id="KW-0872">Ion channel impairing toxin</keyword>
<keyword id="KW-0960">Knottin</keyword>
<keyword id="KW-0528">Neurotoxin</keyword>
<keyword id="KW-0638">Presynaptic neurotoxin</keyword>
<keyword id="KW-0964">Secreted</keyword>
<keyword id="KW-0732">Signal</keyword>
<keyword id="KW-0800">Toxin</keyword>
<keyword id="KW-0738">Voltage-gated sodium channel impairing toxin</keyword>
<feature type="signal peptide" evidence="2">
    <location>
        <begin position="1"/>
        <end position="20"/>
    </location>
</feature>
<feature type="propeptide" id="PRO_5000093661" evidence="2">
    <location>
        <begin position="21"/>
        <end position="34"/>
    </location>
</feature>
<feature type="chain" id="PRO_5000093662" description="U3-agatoxin-Ao1d">
    <location>
        <begin position="35"/>
        <end position="72"/>
    </location>
</feature>
<feature type="modified residue" description="Serine amide" evidence="1">
    <location>
        <position position="72"/>
    </location>
</feature>
<feature type="disulfide bond" evidence="1">
    <location>
        <begin position="37"/>
        <end position="53"/>
    </location>
</feature>
<feature type="disulfide bond" evidence="1">
    <location>
        <begin position="44"/>
        <end position="58"/>
    </location>
</feature>
<feature type="disulfide bond" evidence="1">
    <location>
        <begin position="52"/>
        <end position="68"/>
    </location>
</feature>
<feature type="disulfide bond" evidence="1">
    <location>
        <begin position="60"/>
        <end position="66"/>
    </location>
</feature>
<dbReference type="EMBL" id="AY681329">
    <property type="protein sequence ID" value="AAU87889.1"/>
    <property type="molecule type" value="mRNA"/>
</dbReference>
<dbReference type="ArachnoServer" id="AS000083">
    <property type="toxin name" value="U3-agatoxin-Ao1d"/>
</dbReference>
<dbReference type="GO" id="GO:0005576">
    <property type="term" value="C:extracellular region"/>
    <property type="evidence" value="ECO:0007669"/>
    <property type="project" value="UniProtKB-SubCell"/>
</dbReference>
<dbReference type="GO" id="GO:0044231">
    <property type="term" value="C:host cell presynaptic membrane"/>
    <property type="evidence" value="ECO:0007669"/>
    <property type="project" value="UniProtKB-KW"/>
</dbReference>
<dbReference type="GO" id="GO:0017080">
    <property type="term" value="F:sodium channel regulator activity"/>
    <property type="evidence" value="ECO:0007669"/>
    <property type="project" value="UniProtKB-KW"/>
</dbReference>
<dbReference type="GO" id="GO:0090729">
    <property type="term" value="F:toxin activity"/>
    <property type="evidence" value="ECO:0007669"/>
    <property type="project" value="UniProtKB-KW"/>
</dbReference>
<dbReference type="InterPro" id="IPR016328">
    <property type="entry name" value="Beta/delta-agatoxin_fam"/>
</dbReference>
<dbReference type="Pfam" id="PF05980">
    <property type="entry name" value="Toxin_7"/>
    <property type="match status" value="1"/>
</dbReference>
<dbReference type="SUPFAM" id="SSF57059">
    <property type="entry name" value="omega toxin-like"/>
    <property type="match status" value="1"/>
</dbReference>
<dbReference type="PROSITE" id="PS60015">
    <property type="entry name" value="MU_AGATOXIN"/>
    <property type="match status" value="1"/>
</dbReference>
<sequence>MKAAISLLLLSALLFVVIEAITYEEGKELFQGERTDCVGDGQRCADWAGPYCCSGYYCSCRSMPYCRCRSDSGK</sequence>
<proteinExistence type="evidence at transcript level"/>
<name>T3G1D_AGEOR</name>
<evidence type="ECO:0000250" key="1"/>
<evidence type="ECO:0000255" key="2"/>
<evidence type="ECO:0000305" key="3"/>
<evidence type="ECO:0000312" key="4">
    <source>
        <dbReference type="EMBL" id="AAU87889.1"/>
    </source>
</evidence>
<protein>
    <recommendedName>
        <fullName>U3-agatoxin-Ao1d</fullName>
        <shortName>U3-AGTX-Ao1d</shortName>
    </recommendedName>
    <alternativeName>
        <fullName evidence="4">Mu-2Aga_05</fullName>
    </alternativeName>
</protein>
<comment type="function">
    <text evidence="1">Insecticidal neurotoxin that induces an irreversible spastic paralysis when injected into insects. Modifies presynaptic voltage-gated sodium channels (Nav), causing them to open at the normal resting potential of the nerve. This leads to spontaneous release of neurotransmitter and repetitive action potentials in motor neurons (By similarity).</text>
</comment>
<comment type="subcellular location">
    <subcellularLocation>
        <location evidence="1">Secreted</location>
    </subcellularLocation>
</comment>
<comment type="tissue specificity">
    <text>Expressed by the venom gland.</text>
</comment>
<comment type="domain">
    <text evidence="1">The presence of a 'disulfide through disulfide knot' structurally defines this protein as a knottin.</text>
</comment>
<comment type="similarity">
    <text evidence="3">Belongs to the neurotoxin 07 (Beta/delta-agtx) family. 02 (aga-3) subfamily.</text>
</comment>
<organism>
    <name type="scientific">Agelena orientalis</name>
    <name type="common">Funnel-web spider</name>
    <dbReference type="NCBI Taxonomy" id="293813"/>
    <lineage>
        <taxon>Eukaryota</taxon>
        <taxon>Metazoa</taxon>
        <taxon>Ecdysozoa</taxon>
        <taxon>Arthropoda</taxon>
        <taxon>Chelicerata</taxon>
        <taxon>Arachnida</taxon>
        <taxon>Araneae</taxon>
        <taxon>Araneomorphae</taxon>
        <taxon>Entelegynae</taxon>
        <taxon>Agelenidae</taxon>
        <taxon>Agelena</taxon>
    </lineage>
</organism>